<gene>
    <name evidence="1" type="primary">hisF</name>
    <name type="ordered locus">TRQ2_1772</name>
</gene>
<organism>
    <name type="scientific">Thermotoga sp. (strain RQ2)</name>
    <dbReference type="NCBI Taxonomy" id="126740"/>
    <lineage>
        <taxon>Bacteria</taxon>
        <taxon>Thermotogati</taxon>
        <taxon>Thermotogota</taxon>
        <taxon>Thermotogae</taxon>
        <taxon>Thermotogales</taxon>
        <taxon>Thermotogaceae</taxon>
        <taxon>Thermotoga</taxon>
    </lineage>
</organism>
<proteinExistence type="inferred from homology"/>
<evidence type="ECO:0000255" key="1">
    <source>
        <dbReference type="HAMAP-Rule" id="MF_01013"/>
    </source>
</evidence>
<comment type="function">
    <text evidence="1">IGPS catalyzes the conversion of PRFAR and glutamine to IGP, AICAR and glutamate. The HisF subunit catalyzes the cyclization activity that produces IGP and AICAR from PRFAR using the ammonia provided by the HisH subunit.</text>
</comment>
<comment type="catalytic activity">
    <reaction evidence="1">
        <text>5-[(5-phospho-1-deoxy-D-ribulos-1-ylimino)methylamino]-1-(5-phospho-beta-D-ribosyl)imidazole-4-carboxamide + L-glutamine = D-erythro-1-(imidazol-4-yl)glycerol 3-phosphate + 5-amino-1-(5-phospho-beta-D-ribosyl)imidazole-4-carboxamide + L-glutamate + H(+)</text>
        <dbReference type="Rhea" id="RHEA:24793"/>
        <dbReference type="ChEBI" id="CHEBI:15378"/>
        <dbReference type="ChEBI" id="CHEBI:29985"/>
        <dbReference type="ChEBI" id="CHEBI:58278"/>
        <dbReference type="ChEBI" id="CHEBI:58359"/>
        <dbReference type="ChEBI" id="CHEBI:58475"/>
        <dbReference type="ChEBI" id="CHEBI:58525"/>
        <dbReference type="EC" id="4.3.2.10"/>
    </reaction>
</comment>
<comment type="pathway">
    <text evidence="1">Amino-acid biosynthesis; L-histidine biosynthesis; L-histidine from 5-phospho-alpha-D-ribose 1-diphosphate: step 5/9.</text>
</comment>
<comment type="subunit">
    <text evidence="1">Heterodimer of HisH and HisF.</text>
</comment>
<comment type="subcellular location">
    <subcellularLocation>
        <location evidence="1">Cytoplasm</location>
    </subcellularLocation>
</comment>
<comment type="similarity">
    <text evidence="1">Belongs to the HisA/HisF family.</text>
</comment>
<dbReference type="EC" id="4.3.2.10" evidence="1"/>
<dbReference type="EMBL" id="CP000969">
    <property type="protein sequence ID" value="ACB10103.1"/>
    <property type="molecule type" value="Genomic_DNA"/>
</dbReference>
<dbReference type="RefSeq" id="WP_012311332.1">
    <property type="nucleotide sequence ID" value="NC_010483.1"/>
</dbReference>
<dbReference type="BMRB" id="B1L873"/>
<dbReference type="SMR" id="B1L873"/>
<dbReference type="KEGG" id="trq:TRQ2_1772"/>
<dbReference type="HOGENOM" id="CLU_048577_4_0_0"/>
<dbReference type="UniPathway" id="UPA00031">
    <property type="reaction ID" value="UER00010"/>
</dbReference>
<dbReference type="Proteomes" id="UP000001687">
    <property type="component" value="Chromosome"/>
</dbReference>
<dbReference type="GO" id="GO:0005737">
    <property type="term" value="C:cytoplasm"/>
    <property type="evidence" value="ECO:0007669"/>
    <property type="project" value="UniProtKB-SubCell"/>
</dbReference>
<dbReference type="GO" id="GO:0000107">
    <property type="term" value="F:imidazoleglycerol-phosphate synthase activity"/>
    <property type="evidence" value="ECO:0007669"/>
    <property type="project" value="UniProtKB-UniRule"/>
</dbReference>
<dbReference type="GO" id="GO:0016829">
    <property type="term" value="F:lyase activity"/>
    <property type="evidence" value="ECO:0007669"/>
    <property type="project" value="UniProtKB-KW"/>
</dbReference>
<dbReference type="GO" id="GO:0000105">
    <property type="term" value="P:L-histidine biosynthetic process"/>
    <property type="evidence" value="ECO:0007669"/>
    <property type="project" value="UniProtKB-UniRule"/>
</dbReference>
<dbReference type="CDD" id="cd04731">
    <property type="entry name" value="HisF"/>
    <property type="match status" value="1"/>
</dbReference>
<dbReference type="FunFam" id="3.20.20.70:FF:000006">
    <property type="entry name" value="Imidazole glycerol phosphate synthase subunit HisF"/>
    <property type="match status" value="1"/>
</dbReference>
<dbReference type="Gene3D" id="3.20.20.70">
    <property type="entry name" value="Aldolase class I"/>
    <property type="match status" value="1"/>
</dbReference>
<dbReference type="HAMAP" id="MF_01013">
    <property type="entry name" value="HisF"/>
    <property type="match status" value="1"/>
</dbReference>
<dbReference type="InterPro" id="IPR013785">
    <property type="entry name" value="Aldolase_TIM"/>
</dbReference>
<dbReference type="InterPro" id="IPR006062">
    <property type="entry name" value="His_biosynth"/>
</dbReference>
<dbReference type="InterPro" id="IPR004651">
    <property type="entry name" value="HisF"/>
</dbReference>
<dbReference type="InterPro" id="IPR050064">
    <property type="entry name" value="IGPS_HisA/HisF"/>
</dbReference>
<dbReference type="InterPro" id="IPR011060">
    <property type="entry name" value="RibuloseP-bd_barrel"/>
</dbReference>
<dbReference type="NCBIfam" id="TIGR00735">
    <property type="entry name" value="hisF"/>
    <property type="match status" value="1"/>
</dbReference>
<dbReference type="PANTHER" id="PTHR21235:SF2">
    <property type="entry name" value="IMIDAZOLE GLYCEROL PHOSPHATE SYNTHASE HISHF"/>
    <property type="match status" value="1"/>
</dbReference>
<dbReference type="PANTHER" id="PTHR21235">
    <property type="entry name" value="IMIDAZOLE GLYCEROL PHOSPHATE SYNTHASE SUBUNIT HISF/H IGP SYNTHASE SUBUNIT HISF/H"/>
    <property type="match status" value="1"/>
</dbReference>
<dbReference type="Pfam" id="PF00977">
    <property type="entry name" value="His_biosynth"/>
    <property type="match status" value="1"/>
</dbReference>
<dbReference type="SUPFAM" id="SSF51366">
    <property type="entry name" value="Ribulose-phoshate binding barrel"/>
    <property type="match status" value="1"/>
</dbReference>
<reference key="1">
    <citation type="journal article" date="2011" name="J. Bacteriol.">
        <title>Genome sequence of Thermotoga sp. strain RQ2, a hyperthermophilic bacterium isolated from a geothermally heated region of the seafloor near Ribeira Quente, the Azores.</title>
        <authorList>
            <person name="Swithers K.S."/>
            <person name="DiPippo J.L."/>
            <person name="Bruce D.C."/>
            <person name="Detter C."/>
            <person name="Tapia R."/>
            <person name="Han S."/>
            <person name="Saunders E."/>
            <person name="Goodwin L.A."/>
            <person name="Han J."/>
            <person name="Woyke T."/>
            <person name="Pitluck S."/>
            <person name="Pennacchio L."/>
            <person name="Nolan M."/>
            <person name="Mikhailova N."/>
            <person name="Lykidis A."/>
            <person name="Land M.L."/>
            <person name="Brettin T."/>
            <person name="Stetter K.O."/>
            <person name="Nelson K.E."/>
            <person name="Gogarten J.P."/>
            <person name="Noll K.M."/>
        </authorList>
    </citation>
    <scope>NUCLEOTIDE SEQUENCE [LARGE SCALE GENOMIC DNA]</scope>
    <source>
        <strain>RQ2</strain>
    </source>
</reference>
<sequence>MLAKRIIACLDVKDGRVVKGTNFENLRDSGDPVELGKFYSEIGIDELVFLDITASVEKRKTMLELVEKVAEQIDIPFTVGGGIHDFETASELILRGADKVSINTAAVGNPSLITQIAQTFGSQAVVVAIDAKRVDGEFMVFTYSGKKNTGILLRDWVVEVERRGAGEILLTSIDRDGTKSGYDTEMIRFVRPLTTLPIIASGGAGKMEHFLEAFLAGADAALAASVFHFREIDVRELKEYLKKHGVNVRLEGL</sequence>
<protein>
    <recommendedName>
        <fullName evidence="1">Imidazole glycerol phosphate synthase subunit HisF</fullName>
        <ecNumber evidence="1">4.3.2.10</ecNumber>
    </recommendedName>
    <alternativeName>
        <fullName evidence="1">IGP synthase cyclase subunit</fullName>
    </alternativeName>
    <alternativeName>
        <fullName evidence="1">IGP synthase subunit HisF</fullName>
    </alternativeName>
    <alternativeName>
        <fullName evidence="1">ImGP synthase subunit HisF</fullName>
        <shortName evidence="1">IGPS subunit HisF</shortName>
    </alternativeName>
</protein>
<feature type="chain" id="PRO_1000135055" description="Imidazole glycerol phosphate synthase subunit HisF">
    <location>
        <begin position="1"/>
        <end position="253"/>
    </location>
</feature>
<feature type="active site" evidence="1">
    <location>
        <position position="11"/>
    </location>
</feature>
<feature type="active site" evidence="1">
    <location>
        <position position="130"/>
    </location>
</feature>
<keyword id="KW-0028">Amino-acid biosynthesis</keyword>
<keyword id="KW-0963">Cytoplasm</keyword>
<keyword id="KW-0368">Histidine biosynthesis</keyword>
<keyword id="KW-0456">Lyase</keyword>
<name>HIS6_THESQ</name>
<accession>B1L873</accession>